<gene>
    <name type="ordered locus">DET0036</name>
</gene>
<sequence length="96" mass="10368">MFIELVHIGFGNILAMNRVIAISPPSSAPIKRIIQESRTKGFLIDMTNGRKTKAVIFTDSGHIVLAALAPETITGRLSISRGGAVKPELVDDKLEL</sequence>
<comment type="similarity">
    <text evidence="1">Belongs to the RemA family.</text>
</comment>
<reference key="1">
    <citation type="journal article" date="2005" name="Science">
        <title>Genome sequence of the PCE-dechlorinating bacterium Dehalococcoides ethenogenes.</title>
        <authorList>
            <person name="Seshadri R."/>
            <person name="Adrian L."/>
            <person name="Fouts D.E."/>
            <person name="Eisen J.A."/>
            <person name="Phillippy A.M."/>
            <person name="Methe B.A."/>
            <person name="Ward N.L."/>
            <person name="Nelson W.C."/>
            <person name="DeBoy R.T."/>
            <person name="Khouri H.M."/>
            <person name="Kolonay J.F."/>
            <person name="Dodson R.J."/>
            <person name="Daugherty S.C."/>
            <person name="Brinkac L.M."/>
            <person name="Sullivan S.A."/>
            <person name="Madupu R."/>
            <person name="Nelson K.E."/>
            <person name="Kang K.H."/>
            <person name="Impraim M."/>
            <person name="Tran K."/>
            <person name="Robinson J.M."/>
            <person name="Forberger H.A."/>
            <person name="Fraser C.M."/>
            <person name="Zinder S.H."/>
            <person name="Heidelberg J.F."/>
        </authorList>
    </citation>
    <scope>NUCLEOTIDE SEQUENCE [LARGE SCALE GENOMIC DNA]</scope>
    <source>
        <strain>ATCC BAA-2266 / KCTC 15142 / 195</strain>
    </source>
</reference>
<dbReference type="EMBL" id="CP000027">
    <property type="protein sequence ID" value="AAW39119.1"/>
    <property type="molecule type" value="Genomic_DNA"/>
</dbReference>
<dbReference type="RefSeq" id="WP_010935846.1">
    <property type="nucleotide sequence ID" value="NC_002936.3"/>
</dbReference>
<dbReference type="SMR" id="Q3ZAF8"/>
<dbReference type="FunCoup" id="Q3ZAF8">
    <property type="interactions" value="1"/>
</dbReference>
<dbReference type="STRING" id="243164.DET0036"/>
<dbReference type="GeneID" id="3229076"/>
<dbReference type="KEGG" id="det:DET0036"/>
<dbReference type="eggNOG" id="COG2052">
    <property type="taxonomic scope" value="Bacteria"/>
</dbReference>
<dbReference type="HOGENOM" id="CLU_165326_0_0_0"/>
<dbReference type="InParanoid" id="Q3ZAF8"/>
<dbReference type="Proteomes" id="UP000008289">
    <property type="component" value="Chromosome"/>
</dbReference>
<dbReference type="HAMAP" id="MF_01503">
    <property type="entry name" value="RemA"/>
    <property type="match status" value="1"/>
</dbReference>
<dbReference type="InterPro" id="IPR007169">
    <property type="entry name" value="RemA-like"/>
</dbReference>
<dbReference type="NCBIfam" id="NF003315">
    <property type="entry name" value="PRK04323.1"/>
    <property type="match status" value="1"/>
</dbReference>
<dbReference type="PANTHER" id="PTHR38449:SF1">
    <property type="entry name" value="REGULATORY PROTEIN SSL2874-RELATED"/>
    <property type="match status" value="1"/>
</dbReference>
<dbReference type="PANTHER" id="PTHR38449">
    <property type="entry name" value="REGULATORY PROTEIN TM_1690-RELATED"/>
    <property type="match status" value="1"/>
</dbReference>
<dbReference type="Pfam" id="PF04025">
    <property type="entry name" value="RemA-like"/>
    <property type="match status" value="1"/>
</dbReference>
<accession>Q3ZAF8</accession>
<name>Y036_DEHM1</name>
<evidence type="ECO:0000255" key="1">
    <source>
        <dbReference type="HAMAP-Rule" id="MF_01503"/>
    </source>
</evidence>
<feature type="chain" id="PRO_0000050227" description="Putative regulatory protein DET0036">
    <location>
        <begin position="1"/>
        <end position="96"/>
    </location>
</feature>
<proteinExistence type="inferred from homology"/>
<organism>
    <name type="scientific">Dehalococcoides mccartyi (strain ATCC BAA-2266 / KCTC 15142 / 195)</name>
    <name type="common">Dehalococcoides ethenogenes (strain 195)</name>
    <dbReference type="NCBI Taxonomy" id="243164"/>
    <lineage>
        <taxon>Bacteria</taxon>
        <taxon>Bacillati</taxon>
        <taxon>Chloroflexota</taxon>
        <taxon>Dehalococcoidia</taxon>
        <taxon>Dehalococcoidales</taxon>
        <taxon>Dehalococcoidaceae</taxon>
        <taxon>Dehalococcoides</taxon>
    </lineage>
</organism>
<protein>
    <recommendedName>
        <fullName evidence="1">Putative regulatory protein DET0036</fullName>
    </recommendedName>
</protein>